<reference key="1">
    <citation type="journal article" date="2004" name="Genome Res.">
        <title>The status, quality, and expansion of the NIH full-length cDNA project: the Mammalian Gene Collection (MGC).</title>
        <authorList>
            <consortium name="The MGC Project Team"/>
        </authorList>
    </citation>
    <scope>NUCLEOTIDE SEQUENCE [LARGE SCALE MRNA]</scope>
    <source>
        <tissue>Testis</tissue>
    </source>
</reference>
<dbReference type="EMBL" id="BC128762">
    <property type="protein sequence ID" value="AAI28763.1"/>
    <property type="molecule type" value="mRNA"/>
</dbReference>
<dbReference type="RefSeq" id="NP_001073354.1">
    <property type="nucleotide sequence ID" value="NM_001079885.1"/>
</dbReference>
<dbReference type="SMR" id="A1A5Q7"/>
<dbReference type="FunCoup" id="A1A5Q7">
    <property type="interactions" value="128"/>
</dbReference>
<dbReference type="STRING" id="10116.ENSRNOP00000032210"/>
<dbReference type="iPTMnet" id="A1A5Q7"/>
<dbReference type="PhosphoSitePlus" id="A1A5Q7"/>
<dbReference type="PaxDb" id="10116-ENSRNOP00000032210"/>
<dbReference type="GeneID" id="293449"/>
<dbReference type="KEGG" id="rno:293449"/>
<dbReference type="UCSC" id="RGD:1311670">
    <property type="organism name" value="rat"/>
</dbReference>
<dbReference type="AGR" id="RGD:1311670"/>
<dbReference type="CTD" id="146177"/>
<dbReference type="RGD" id="1311670">
    <property type="gene designation" value="Vwa3a"/>
</dbReference>
<dbReference type="eggNOG" id="ENOG502QTDG">
    <property type="taxonomic scope" value="Eukaryota"/>
</dbReference>
<dbReference type="InParanoid" id="A1A5Q7"/>
<dbReference type="PhylomeDB" id="A1A5Q7"/>
<dbReference type="PRO" id="PR:A1A5Q7"/>
<dbReference type="Proteomes" id="UP000002494">
    <property type="component" value="Unplaced"/>
</dbReference>
<dbReference type="Gene3D" id="3.40.50.410">
    <property type="entry name" value="von Willebrand factor, type A domain"/>
    <property type="match status" value="1"/>
</dbReference>
<dbReference type="InterPro" id="IPR002035">
    <property type="entry name" value="VWF_A"/>
</dbReference>
<dbReference type="InterPro" id="IPR036465">
    <property type="entry name" value="vWFA_dom_sf"/>
</dbReference>
<dbReference type="PANTHER" id="PTHR46478">
    <property type="entry name" value="VON WILLEBRAND FACTOR A DOMAIN-CONTAINING PROTEIN 3A"/>
    <property type="match status" value="1"/>
</dbReference>
<dbReference type="PANTHER" id="PTHR46478:SF1">
    <property type="entry name" value="VON WILLEBRAND FACTOR A DOMAIN-CONTAINING PROTEIN 3A"/>
    <property type="match status" value="1"/>
</dbReference>
<dbReference type="Pfam" id="PF13768">
    <property type="entry name" value="VWA_3"/>
    <property type="match status" value="2"/>
</dbReference>
<dbReference type="SUPFAM" id="SSF53300">
    <property type="entry name" value="vWA-like"/>
    <property type="match status" value="2"/>
</dbReference>
<organism>
    <name type="scientific">Rattus norvegicus</name>
    <name type="common">Rat</name>
    <dbReference type="NCBI Taxonomy" id="10116"/>
    <lineage>
        <taxon>Eukaryota</taxon>
        <taxon>Metazoa</taxon>
        <taxon>Chordata</taxon>
        <taxon>Craniata</taxon>
        <taxon>Vertebrata</taxon>
        <taxon>Euteleostomi</taxon>
        <taxon>Mammalia</taxon>
        <taxon>Eutheria</taxon>
        <taxon>Euarchontoglires</taxon>
        <taxon>Glires</taxon>
        <taxon>Rodentia</taxon>
        <taxon>Myomorpha</taxon>
        <taxon>Muroidea</taxon>
        <taxon>Muridae</taxon>
        <taxon>Murinae</taxon>
        <taxon>Rattus</taxon>
    </lineage>
</organism>
<accession>A1A5Q7</accession>
<feature type="chain" id="PRO_0000324626" description="von Willebrand factor A domain-containing protein 3A">
    <location>
        <begin position="1"/>
        <end position="737"/>
    </location>
</feature>
<feature type="domain" description="VWFA">
    <location>
        <begin position="484"/>
        <end position="681"/>
    </location>
</feature>
<feature type="region of interest" description="Disordered" evidence="1">
    <location>
        <begin position="1"/>
        <end position="22"/>
    </location>
</feature>
<feature type="region of interest" description="Disordered" evidence="1">
    <location>
        <begin position="711"/>
        <end position="737"/>
    </location>
</feature>
<feature type="compositionally biased region" description="Basic and acidic residues" evidence="1">
    <location>
        <begin position="1"/>
        <end position="17"/>
    </location>
</feature>
<gene>
    <name type="primary">Vwa3a</name>
</gene>
<evidence type="ECO:0000256" key="1">
    <source>
        <dbReference type="SAM" id="MobiDB-lite"/>
    </source>
</evidence>
<sequence length="737" mass="83254">MKKHRWSMDRNTDRDPQKQLNQKTMNDVTQNSQDGLLVTHVNQTQDLLRLQRSETQTSALEDSEDWLAMHSLKFEKLTLADLISQGTVELEDQNNAVPKVHFTTQTIYHFTSRLSDTIELYQQRMRWLTENSKKAFGLIKGSRVGLLIDSSQVSSGPQTEEFQNDLTSLIDEQLSLKEKLYVLTFGGTTNFLWPDPVEVSASTLQELKLWVKTLQPEGSSNLLQALKKVLARKELNSLVAILRSCPDQPSEFLSDFIQQSTLGRSLFIHIVTYKCDDHVPSAILKNLTDALGGHYHCYSPESELYTSRDVDELLAETHKAQGLFSQLQALCHNNPCEELSCMIEEISTEIAKGPFTSLLPKPPKHEAPLTIKFPDLDKTSAEWLKINGLKAKKLGLYQVLAPNAFNPVEEFVPILQKTVGATIHEKAMVQFEWHDGTVKNIHVDPPVLFEYQKQLGKAVQIYEKRLQWLSLTSRRFWGTVCQRRVVILLDVSVTNSMFIIHIQHSLRLLLEEQLSNKDYFNIIAFGSTVESWRPEMVAVSHDNLQRAWRWALGLQCQGSRNVLGALRKAIEVDFKDKTKHESQGIYLFTGGVPDQDVHILSAYVAEACGGCDLQLNVCLFYVGEPQMNTTPPACYASRTDTAAAYKEVTQAACGRFHWFGETGIYESDDSNAIVSEIEKALNYSQKCAFLVASLKNHSGKELLTAALQKDKPRTLQQSQPKKLYPPKPTAPSVARMV</sequence>
<proteinExistence type="evidence at transcript level"/>
<keyword id="KW-1185">Reference proteome</keyword>
<name>VWA3A_RAT</name>
<protein>
    <recommendedName>
        <fullName>von Willebrand factor A domain-containing protein 3A</fullName>
    </recommendedName>
</protein>